<sequence length="364" mass="41541">MEINNRVAIGMSGGVDSSVAAYLLKKQGFDVIGLTMRVWVDHEAKAFDSDKSCCSLKATQDAKKVAEILGIPHYTVDLSKIFYDKIVNYFVNEYLKGRTPNPCVLCNRQIKFGELLEKAFELGAYYIATGHYVRKEYDEKTKRYLLKKGIDSSKDQSYVLYRLTQKQLEHALFPLGNYKKEEIRALAEELKLPVAKKPESQEICFIPDNDYSGLIKRQVKDEIKPGEFRDVHGKFLGYHKGIIHYTIGQRRGLGLSSDRPLYVVDIDVKNNVVVVGHQEDVWGEELISSNNNFISIEKLEKEMKVTAKIRYTAKEEEAIIKPYEEDKVLVKFLKPQRAITPGQSVVFYDKDVVVGGGIIERKLK</sequence>
<accession>B0K0P8</accession>
<gene>
    <name evidence="1" type="primary">mnmA2</name>
    <name type="ordered locus">Teth514_1486</name>
</gene>
<reference key="1">
    <citation type="submission" date="2008-01" db="EMBL/GenBank/DDBJ databases">
        <title>Complete sequence of Thermoanaerobacter sp. X514.</title>
        <authorList>
            <consortium name="US DOE Joint Genome Institute"/>
            <person name="Copeland A."/>
            <person name="Lucas S."/>
            <person name="Lapidus A."/>
            <person name="Barry K."/>
            <person name="Glavina del Rio T."/>
            <person name="Dalin E."/>
            <person name="Tice H."/>
            <person name="Pitluck S."/>
            <person name="Bruce D."/>
            <person name="Goodwin L."/>
            <person name="Saunders E."/>
            <person name="Brettin T."/>
            <person name="Detter J.C."/>
            <person name="Han C."/>
            <person name="Schmutz J."/>
            <person name="Larimer F."/>
            <person name="Land M."/>
            <person name="Hauser L."/>
            <person name="Kyrpides N."/>
            <person name="Kim E."/>
            <person name="Hemme C."/>
            <person name="Fields M.W."/>
            <person name="He Z."/>
            <person name="Zhou J."/>
            <person name="Richardson P."/>
        </authorList>
    </citation>
    <scope>NUCLEOTIDE SEQUENCE [LARGE SCALE GENOMIC DNA]</scope>
    <source>
        <strain>X514</strain>
    </source>
</reference>
<dbReference type="EC" id="2.8.1.13" evidence="1"/>
<dbReference type="EMBL" id="CP000923">
    <property type="protein sequence ID" value="ABY92773.1"/>
    <property type="status" value="ALT_INIT"/>
    <property type="molecule type" value="Genomic_DNA"/>
</dbReference>
<dbReference type="SMR" id="B0K0P8"/>
<dbReference type="KEGG" id="tex:Teth514_1486"/>
<dbReference type="HOGENOM" id="CLU_035188_0_0_9"/>
<dbReference type="Proteomes" id="UP000002155">
    <property type="component" value="Chromosome"/>
</dbReference>
<dbReference type="GO" id="GO:0005737">
    <property type="term" value="C:cytoplasm"/>
    <property type="evidence" value="ECO:0007669"/>
    <property type="project" value="UniProtKB-SubCell"/>
</dbReference>
<dbReference type="GO" id="GO:0005524">
    <property type="term" value="F:ATP binding"/>
    <property type="evidence" value="ECO:0007669"/>
    <property type="project" value="UniProtKB-KW"/>
</dbReference>
<dbReference type="GO" id="GO:0000049">
    <property type="term" value="F:tRNA binding"/>
    <property type="evidence" value="ECO:0007669"/>
    <property type="project" value="UniProtKB-KW"/>
</dbReference>
<dbReference type="GO" id="GO:0103016">
    <property type="term" value="F:tRNA-uridine 2-sulfurtransferase activity"/>
    <property type="evidence" value="ECO:0007669"/>
    <property type="project" value="UniProtKB-EC"/>
</dbReference>
<dbReference type="GO" id="GO:0002143">
    <property type="term" value="P:tRNA wobble position uridine thiolation"/>
    <property type="evidence" value="ECO:0007669"/>
    <property type="project" value="TreeGrafter"/>
</dbReference>
<dbReference type="CDD" id="cd01998">
    <property type="entry name" value="MnmA_TRMU-like"/>
    <property type="match status" value="1"/>
</dbReference>
<dbReference type="FunFam" id="2.30.30.280:FF:000001">
    <property type="entry name" value="tRNA-specific 2-thiouridylase MnmA"/>
    <property type="match status" value="1"/>
</dbReference>
<dbReference type="FunFam" id="2.40.30.10:FF:000023">
    <property type="entry name" value="tRNA-specific 2-thiouridylase MnmA"/>
    <property type="match status" value="1"/>
</dbReference>
<dbReference type="FunFam" id="3.40.50.620:FF:000115">
    <property type="entry name" value="tRNA-specific 2-thiouridylase MnmA"/>
    <property type="match status" value="1"/>
</dbReference>
<dbReference type="Gene3D" id="2.30.30.280">
    <property type="entry name" value="Adenine nucleotide alpha hydrolases-like domains"/>
    <property type="match status" value="1"/>
</dbReference>
<dbReference type="Gene3D" id="3.40.50.620">
    <property type="entry name" value="HUPs"/>
    <property type="match status" value="1"/>
</dbReference>
<dbReference type="Gene3D" id="2.40.30.10">
    <property type="entry name" value="Translation factors"/>
    <property type="match status" value="1"/>
</dbReference>
<dbReference type="HAMAP" id="MF_00144">
    <property type="entry name" value="tRNA_thiouridyl_MnmA"/>
    <property type="match status" value="1"/>
</dbReference>
<dbReference type="InterPro" id="IPR004506">
    <property type="entry name" value="MnmA-like"/>
</dbReference>
<dbReference type="InterPro" id="IPR046885">
    <property type="entry name" value="MnmA-like_C"/>
</dbReference>
<dbReference type="InterPro" id="IPR046884">
    <property type="entry name" value="MnmA-like_central"/>
</dbReference>
<dbReference type="InterPro" id="IPR023382">
    <property type="entry name" value="MnmA-like_central_sf"/>
</dbReference>
<dbReference type="InterPro" id="IPR014729">
    <property type="entry name" value="Rossmann-like_a/b/a_fold"/>
</dbReference>
<dbReference type="NCBIfam" id="NF001138">
    <property type="entry name" value="PRK00143.1"/>
    <property type="match status" value="1"/>
</dbReference>
<dbReference type="NCBIfam" id="TIGR00420">
    <property type="entry name" value="trmU"/>
    <property type="match status" value="1"/>
</dbReference>
<dbReference type="PANTHER" id="PTHR11933:SF5">
    <property type="entry name" value="MITOCHONDRIAL TRNA-SPECIFIC 2-THIOURIDYLASE 1"/>
    <property type="match status" value="1"/>
</dbReference>
<dbReference type="PANTHER" id="PTHR11933">
    <property type="entry name" value="TRNA 5-METHYLAMINOMETHYL-2-THIOURIDYLATE -METHYLTRANSFERASE"/>
    <property type="match status" value="1"/>
</dbReference>
<dbReference type="Pfam" id="PF03054">
    <property type="entry name" value="tRNA_Me_trans"/>
    <property type="match status" value="1"/>
</dbReference>
<dbReference type="Pfam" id="PF20258">
    <property type="entry name" value="tRNA_Me_trans_C"/>
    <property type="match status" value="1"/>
</dbReference>
<dbReference type="Pfam" id="PF20259">
    <property type="entry name" value="tRNA_Me_trans_M"/>
    <property type="match status" value="1"/>
</dbReference>
<dbReference type="SUPFAM" id="SSF52402">
    <property type="entry name" value="Adenine nucleotide alpha hydrolases-like"/>
    <property type="match status" value="1"/>
</dbReference>
<name>MNMA2_THEPX</name>
<protein>
    <recommendedName>
        <fullName evidence="1">tRNA-specific 2-thiouridylase MnmA 2</fullName>
        <ecNumber evidence="1">2.8.1.13</ecNumber>
    </recommendedName>
</protein>
<proteinExistence type="inferred from homology"/>
<evidence type="ECO:0000255" key="1">
    <source>
        <dbReference type="HAMAP-Rule" id="MF_00144"/>
    </source>
</evidence>
<evidence type="ECO:0000305" key="2"/>
<organism>
    <name type="scientific">Thermoanaerobacter sp. (strain X514)</name>
    <dbReference type="NCBI Taxonomy" id="399726"/>
    <lineage>
        <taxon>Bacteria</taxon>
        <taxon>Bacillati</taxon>
        <taxon>Bacillota</taxon>
        <taxon>Clostridia</taxon>
        <taxon>Thermoanaerobacterales</taxon>
        <taxon>Thermoanaerobacteraceae</taxon>
        <taxon>Thermoanaerobacter</taxon>
    </lineage>
</organism>
<keyword id="KW-0067">ATP-binding</keyword>
<keyword id="KW-0963">Cytoplasm</keyword>
<keyword id="KW-1015">Disulfide bond</keyword>
<keyword id="KW-0547">Nucleotide-binding</keyword>
<keyword id="KW-0694">RNA-binding</keyword>
<keyword id="KW-0808">Transferase</keyword>
<keyword id="KW-0819">tRNA processing</keyword>
<keyword id="KW-0820">tRNA-binding</keyword>
<comment type="function">
    <text evidence="1">Catalyzes the 2-thiolation of uridine at the wobble position (U34) of tRNA, leading to the formation of s(2)U34.</text>
</comment>
<comment type="catalytic activity">
    <reaction evidence="1">
        <text>S-sulfanyl-L-cysteinyl-[protein] + uridine(34) in tRNA + AH2 + ATP = 2-thiouridine(34) in tRNA + L-cysteinyl-[protein] + A + AMP + diphosphate + H(+)</text>
        <dbReference type="Rhea" id="RHEA:47032"/>
        <dbReference type="Rhea" id="RHEA-COMP:10131"/>
        <dbReference type="Rhea" id="RHEA-COMP:11726"/>
        <dbReference type="Rhea" id="RHEA-COMP:11727"/>
        <dbReference type="Rhea" id="RHEA-COMP:11728"/>
        <dbReference type="ChEBI" id="CHEBI:13193"/>
        <dbReference type="ChEBI" id="CHEBI:15378"/>
        <dbReference type="ChEBI" id="CHEBI:17499"/>
        <dbReference type="ChEBI" id="CHEBI:29950"/>
        <dbReference type="ChEBI" id="CHEBI:30616"/>
        <dbReference type="ChEBI" id="CHEBI:33019"/>
        <dbReference type="ChEBI" id="CHEBI:61963"/>
        <dbReference type="ChEBI" id="CHEBI:65315"/>
        <dbReference type="ChEBI" id="CHEBI:87170"/>
        <dbReference type="ChEBI" id="CHEBI:456215"/>
        <dbReference type="EC" id="2.8.1.13"/>
    </reaction>
</comment>
<comment type="subcellular location">
    <subcellularLocation>
        <location evidence="1">Cytoplasm</location>
    </subcellularLocation>
</comment>
<comment type="similarity">
    <text evidence="1">Belongs to the MnmA/TRMU family.</text>
</comment>
<comment type="sequence caution" evidence="2">
    <conflict type="erroneous initiation">
        <sequence resource="EMBL-CDS" id="ABY92773"/>
    </conflict>
</comment>
<feature type="chain" id="PRO_0000349841" description="tRNA-specific 2-thiouridylase MnmA 2">
    <location>
        <begin position="1"/>
        <end position="364"/>
    </location>
</feature>
<feature type="region of interest" description="Interaction with tRNA" evidence="1">
    <location>
        <begin position="154"/>
        <end position="156"/>
    </location>
</feature>
<feature type="region of interest" description="Interaction with tRNA" evidence="1">
    <location>
        <begin position="310"/>
        <end position="311"/>
    </location>
</feature>
<feature type="active site" description="Nucleophile" evidence="1">
    <location>
        <position position="106"/>
    </location>
</feature>
<feature type="active site" description="Cysteine persulfide intermediate" evidence="1">
    <location>
        <position position="204"/>
    </location>
</feature>
<feature type="binding site" evidence="1">
    <location>
        <begin position="10"/>
        <end position="17"/>
    </location>
    <ligand>
        <name>ATP</name>
        <dbReference type="ChEBI" id="CHEBI:30616"/>
    </ligand>
</feature>
<feature type="binding site" evidence="1">
    <location>
        <position position="36"/>
    </location>
    <ligand>
        <name>ATP</name>
        <dbReference type="ChEBI" id="CHEBI:30616"/>
    </ligand>
</feature>
<feature type="binding site" evidence="1">
    <location>
        <position position="130"/>
    </location>
    <ligand>
        <name>ATP</name>
        <dbReference type="ChEBI" id="CHEBI:30616"/>
    </ligand>
</feature>
<feature type="site" description="Interaction with tRNA" evidence="1">
    <location>
        <position position="131"/>
    </location>
</feature>
<feature type="site" description="Interaction with tRNA" evidence="1">
    <location>
        <position position="343"/>
    </location>
</feature>
<feature type="disulfide bond" description="Alternate" evidence="1">
    <location>
        <begin position="106"/>
        <end position="204"/>
    </location>
</feature>